<reference key="1">
    <citation type="journal article" date="2005" name="J. Bacteriol.">
        <title>Insights into genome plasticity and pathogenicity of the plant pathogenic Bacterium Xanthomonas campestris pv. vesicatoria revealed by the complete genome sequence.</title>
        <authorList>
            <person name="Thieme F."/>
            <person name="Koebnik R."/>
            <person name="Bekel T."/>
            <person name="Berger C."/>
            <person name="Boch J."/>
            <person name="Buettner D."/>
            <person name="Caldana C."/>
            <person name="Gaigalat L."/>
            <person name="Goesmann A."/>
            <person name="Kay S."/>
            <person name="Kirchner O."/>
            <person name="Lanz C."/>
            <person name="Linke B."/>
            <person name="McHardy A.C."/>
            <person name="Meyer F."/>
            <person name="Mittenhuber G."/>
            <person name="Nies D.H."/>
            <person name="Niesbach-Kloesgen U."/>
            <person name="Patschkowski T."/>
            <person name="Rueckert C."/>
            <person name="Rupp O."/>
            <person name="Schneiker S."/>
            <person name="Schuster S.C."/>
            <person name="Vorhoelter F.J."/>
            <person name="Weber E."/>
            <person name="Puehler A."/>
            <person name="Bonas U."/>
            <person name="Bartels D."/>
            <person name="Kaiser O."/>
        </authorList>
    </citation>
    <scope>NUCLEOTIDE SEQUENCE [LARGE SCALE GENOMIC DNA]</scope>
    <source>
        <strain>85-10</strain>
    </source>
</reference>
<keyword id="KW-0687">Ribonucleoprotein</keyword>
<keyword id="KW-0689">Ribosomal protein</keyword>
<keyword id="KW-0694">RNA-binding</keyword>
<keyword id="KW-0699">rRNA-binding</keyword>
<name>RL23_XANE5</name>
<gene>
    <name evidence="1" type="primary">rplW</name>
    <name type="ordered locus">XCV1001</name>
</gene>
<protein>
    <recommendedName>
        <fullName evidence="1">Large ribosomal subunit protein uL23</fullName>
    </recommendedName>
    <alternativeName>
        <fullName evidence="2">50S ribosomal protein L23</fullName>
    </alternativeName>
</protein>
<evidence type="ECO:0000255" key="1">
    <source>
        <dbReference type="HAMAP-Rule" id="MF_01369"/>
    </source>
</evidence>
<evidence type="ECO:0000305" key="2"/>
<dbReference type="EMBL" id="AM039952">
    <property type="protein sequence ID" value="CAJ22632.1"/>
    <property type="molecule type" value="Genomic_DNA"/>
</dbReference>
<dbReference type="RefSeq" id="WP_003486717.1">
    <property type="nucleotide sequence ID" value="NZ_CP017190.1"/>
</dbReference>
<dbReference type="SMR" id="Q3BWY1"/>
<dbReference type="STRING" id="456327.BJD11_17730"/>
<dbReference type="GeneID" id="77338711"/>
<dbReference type="KEGG" id="xcv:XCV1001"/>
<dbReference type="eggNOG" id="COG0089">
    <property type="taxonomic scope" value="Bacteria"/>
</dbReference>
<dbReference type="HOGENOM" id="CLU_037562_3_1_6"/>
<dbReference type="Proteomes" id="UP000007069">
    <property type="component" value="Chromosome"/>
</dbReference>
<dbReference type="GO" id="GO:1990904">
    <property type="term" value="C:ribonucleoprotein complex"/>
    <property type="evidence" value="ECO:0007669"/>
    <property type="project" value="UniProtKB-KW"/>
</dbReference>
<dbReference type="GO" id="GO:0005840">
    <property type="term" value="C:ribosome"/>
    <property type="evidence" value="ECO:0007669"/>
    <property type="project" value="UniProtKB-KW"/>
</dbReference>
<dbReference type="GO" id="GO:0019843">
    <property type="term" value="F:rRNA binding"/>
    <property type="evidence" value="ECO:0007669"/>
    <property type="project" value="UniProtKB-UniRule"/>
</dbReference>
<dbReference type="GO" id="GO:0003735">
    <property type="term" value="F:structural constituent of ribosome"/>
    <property type="evidence" value="ECO:0007669"/>
    <property type="project" value="InterPro"/>
</dbReference>
<dbReference type="GO" id="GO:0006412">
    <property type="term" value="P:translation"/>
    <property type="evidence" value="ECO:0007669"/>
    <property type="project" value="UniProtKB-UniRule"/>
</dbReference>
<dbReference type="FunFam" id="3.30.70.330:FF:000001">
    <property type="entry name" value="50S ribosomal protein L23"/>
    <property type="match status" value="1"/>
</dbReference>
<dbReference type="Gene3D" id="3.30.70.330">
    <property type="match status" value="1"/>
</dbReference>
<dbReference type="HAMAP" id="MF_01369_B">
    <property type="entry name" value="Ribosomal_uL23_B"/>
    <property type="match status" value="1"/>
</dbReference>
<dbReference type="InterPro" id="IPR012677">
    <property type="entry name" value="Nucleotide-bd_a/b_plait_sf"/>
</dbReference>
<dbReference type="InterPro" id="IPR013025">
    <property type="entry name" value="Ribosomal_uL23-like"/>
</dbReference>
<dbReference type="InterPro" id="IPR012678">
    <property type="entry name" value="Ribosomal_uL23/eL15/eS24_sf"/>
</dbReference>
<dbReference type="NCBIfam" id="NF004359">
    <property type="entry name" value="PRK05738.1-3"/>
    <property type="match status" value="1"/>
</dbReference>
<dbReference type="NCBIfam" id="NF004363">
    <property type="entry name" value="PRK05738.2-4"/>
    <property type="match status" value="1"/>
</dbReference>
<dbReference type="PANTHER" id="PTHR11620">
    <property type="entry name" value="60S RIBOSOMAL PROTEIN L23A"/>
    <property type="match status" value="1"/>
</dbReference>
<dbReference type="Pfam" id="PF00276">
    <property type="entry name" value="Ribosomal_L23"/>
    <property type="match status" value="1"/>
</dbReference>
<dbReference type="SUPFAM" id="SSF54189">
    <property type="entry name" value="Ribosomal proteins S24e, L23 and L15e"/>
    <property type="match status" value="1"/>
</dbReference>
<sequence>MSSNEKIFSVLRAPRVSEKTARLQEISNQYVFEVSNEATKADVKAAVEQLFDVKVKAVNVVNVKGKSKSFRNRAGNRGNWRKAYVRLVDGQSIDVTAKA</sequence>
<organism>
    <name type="scientific">Xanthomonas euvesicatoria pv. vesicatoria (strain 85-10)</name>
    <name type="common">Xanthomonas campestris pv. vesicatoria</name>
    <dbReference type="NCBI Taxonomy" id="316273"/>
    <lineage>
        <taxon>Bacteria</taxon>
        <taxon>Pseudomonadati</taxon>
        <taxon>Pseudomonadota</taxon>
        <taxon>Gammaproteobacteria</taxon>
        <taxon>Lysobacterales</taxon>
        <taxon>Lysobacteraceae</taxon>
        <taxon>Xanthomonas</taxon>
    </lineage>
</organism>
<accession>Q3BWY1</accession>
<comment type="function">
    <text evidence="1">One of the early assembly proteins it binds 23S rRNA. One of the proteins that surrounds the polypeptide exit tunnel on the outside of the ribosome. Forms the main docking site for trigger factor binding to the ribosome.</text>
</comment>
<comment type="subunit">
    <text evidence="1">Part of the 50S ribosomal subunit. Contacts protein L29, and trigger factor when it is bound to the ribosome.</text>
</comment>
<comment type="similarity">
    <text evidence="1">Belongs to the universal ribosomal protein uL23 family.</text>
</comment>
<feature type="chain" id="PRO_0000272877" description="Large ribosomal subunit protein uL23">
    <location>
        <begin position="1"/>
        <end position="99"/>
    </location>
</feature>
<proteinExistence type="inferred from homology"/>